<evidence type="ECO:0000269" key="1">
    <source>
    </source>
</evidence>
<evidence type="ECO:0000269" key="2">
    <source>
    </source>
</evidence>
<evidence type="ECO:0000269" key="3">
    <source>
    </source>
</evidence>
<evidence type="ECO:0000269" key="4">
    <source>
    </source>
</evidence>
<evidence type="ECO:0007744" key="5">
    <source>
    </source>
</evidence>
<evidence type="ECO:0007829" key="6">
    <source>
        <dbReference type="PDB" id="6DEI"/>
    </source>
</evidence>
<comment type="function">
    <text>May be involved in the establishment of the daughter fate.</text>
</comment>
<comment type="subcellular location">
    <subcellularLocation>
        <location evidence="3">Bud neck</location>
    </subcellularLocation>
</comment>
<comment type="developmental stage">
    <text evidence="2">Expressed in daughter cells.</text>
</comment>
<comment type="induction">
    <text evidence="1 2">Expressed periodically during cell division. Requires ACE2, CBK1, MOB2 and SWI5.</text>
</comment>
<comment type="miscellaneous">
    <text evidence="4">Present with 922 molecules/cell in log phase SD medium.</text>
</comment>
<keyword id="KW-0002">3D-structure</keyword>
<keyword id="KW-0131">Cell cycle</keyword>
<keyword id="KW-0597">Phosphoprotein</keyword>
<keyword id="KW-1185">Reference proteome</keyword>
<reference key="1">
    <citation type="journal article" date="1997" name="Yeast">
        <title>Sequencing analysis of a 36.8 kb fragment of yeast chromosome XV reveals 26 open reading frames including SEC63, CDC31, SUG2, GCD1, RBL2, PNT1, PAC1 and VPH1.</title>
        <authorList>
            <person name="Poirey R."/>
            <person name="Jauniaux J.-C."/>
        </authorList>
    </citation>
    <scope>NUCLEOTIDE SEQUENCE [GENOMIC DNA]</scope>
</reference>
<reference key="2">
    <citation type="journal article" date="1997" name="Nature">
        <title>The nucleotide sequence of Saccharomyces cerevisiae chromosome XV.</title>
        <authorList>
            <person name="Dujon B."/>
            <person name="Albermann K."/>
            <person name="Aldea M."/>
            <person name="Alexandraki D."/>
            <person name="Ansorge W."/>
            <person name="Arino J."/>
            <person name="Benes V."/>
            <person name="Bohn C."/>
            <person name="Bolotin-Fukuhara M."/>
            <person name="Bordonne R."/>
            <person name="Boyer J."/>
            <person name="Camasses A."/>
            <person name="Casamayor A."/>
            <person name="Casas C."/>
            <person name="Cheret G."/>
            <person name="Cziepluch C."/>
            <person name="Daignan-Fornier B."/>
            <person name="Dang V.-D."/>
            <person name="de Haan M."/>
            <person name="Delius H."/>
            <person name="Durand P."/>
            <person name="Fairhead C."/>
            <person name="Feldmann H."/>
            <person name="Gaillon L."/>
            <person name="Galisson F."/>
            <person name="Gamo F.-J."/>
            <person name="Gancedo C."/>
            <person name="Goffeau A."/>
            <person name="Goulding S.E."/>
            <person name="Grivell L.A."/>
            <person name="Habbig B."/>
            <person name="Hand N.J."/>
            <person name="Hani J."/>
            <person name="Hattenhorst U."/>
            <person name="Hebling U."/>
            <person name="Hernando Y."/>
            <person name="Herrero E."/>
            <person name="Heumann K."/>
            <person name="Hiesel R."/>
            <person name="Hilger F."/>
            <person name="Hofmann B."/>
            <person name="Hollenberg C.P."/>
            <person name="Hughes B."/>
            <person name="Jauniaux J.-C."/>
            <person name="Kalogeropoulos A."/>
            <person name="Katsoulou C."/>
            <person name="Kordes E."/>
            <person name="Lafuente M.J."/>
            <person name="Landt O."/>
            <person name="Louis E.J."/>
            <person name="Maarse A.C."/>
            <person name="Madania A."/>
            <person name="Mannhaupt G."/>
            <person name="Marck C."/>
            <person name="Martin R.P."/>
            <person name="Mewes H.-W."/>
            <person name="Michaux G."/>
            <person name="Paces V."/>
            <person name="Parle-McDermott A.G."/>
            <person name="Pearson B.M."/>
            <person name="Perrin A."/>
            <person name="Pettersson B."/>
            <person name="Poch O."/>
            <person name="Pohl T.M."/>
            <person name="Poirey R."/>
            <person name="Portetelle D."/>
            <person name="Pujol A."/>
            <person name="Purnelle B."/>
            <person name="Ramezani Rad M."/>
            <person name="Rechmann S."/>
            <person name="Schwager C."/>
            <person name="Schweizer M."/>
            <person name="Sor F."/>
            <person name="Sterky F."/>
            <person name="Tarassov I.A."/>
            <person name="Teodoru C."/>
            <person name="Tettelin H."/>
            <person name="Thierry A."/>
            <person name="Tobiasch E."/>
            <person name="Tzermia M."/>
            <person name="Uhlen M."/>
            <person name="Unseld M."/>
            <person name="Valens M."/>
            <person name="Vandenbol M."/>
            <person name="Vetter I."/>
            <person name="Vlcek C."/>
            <person name="Voet M."/>
            <person name="Volckaert G."/>
            <person name="Voss H."/>
            <person name="Wambutt R."/>
            <person name="Wedler H."/>
            <person name="Wiemann S."/>
            <person name="Winsor B."/>
            <person name="Wolfe K.H."/>
            <person name="Zollner A."/>
            <person name="Zumstein E."/>
            <person name="Kleine K."/>
        </authorList>
    </citation>
    <scope>NUCLEOTIDE SEQUENCE [LARGE SCALE GENOMIC DNA]</scope>
    <source>
        <strain>ATCC 204508 / S288c</strain>
    </source>
</reference>
<reference key="3">
    <citation type="journal article" date="2014" name="G3 (Bethesda)">
        <title>The reference genome sequence of Saccharomyces cerevisiae: Then and now.</title>
        <authorList>
            <person name="Engel S.R."/>
            <person name="Dietrich F.S."/>
            <person name="Fisk D.G."/>
            <person name="Binkley G."/>
            <person name="Balakrishnan R."/>
            <person name="Costanzo M.C."/>
            <person name="Dwight S.S."/>
            <person name="Hitz B.C."/>
            <person name="Karra K."/>
            <person name="Nash R.S."/>
            <person name="Weng S."/>
            <person name="Wong E.D."/>
            <person name="Lloyd P."/>
            <person name="Skrzypek M.S."/>
            <person name="Miyasato S.R."/>
            <person name="Simison M."/>
            <person name="Cherry J.M."/>
        </authorList>
    </citation>
    <scope>GENOME REANNOTATION</scope>
    <source>
        <strain>ATCC 204508 / S288c</strain>
    </source>
</reference>
<reference key="4">
    <citation type="journal article" date="2007" name="Genome Res.">
        <title>Approaching a complete repository of sequence-verified protein-encoding clones for Saccharomyces cerevisiae.</title>
        <authorList>
            <person name="Hu Y."/>
            <person name="Rolfs A."/>
            <person name="Bhullar B."/>
            <person name="Murthy T.V.S."/>
            <person name="Zhu C."/>
            <person name="Berger M.F."/>
            <person name="Camargo A.A."/>
            <person name="Kelley F."/>
            <person name="McCarron S."/>
            <person name="Jepson D."/>
            <person name="Richardson A."/>
            <person name="Raphael J."/>
            <person name="Moreira D."/>
            <person name="Taycher E."/>
            <person name="Zuo D."/>
            <person name="Mohr S."/>
            <person name="Kane M.F."/>
            <person name="Williamson J."/>
            <person name="Simpson A.J.G."/>
            <person name="Bulyk M.L."/>
            <person name="Harlow E."/>
            <person name="Marsischky G."/>
            <person name="Kolodner R.D."/>
            <person name="LaBaer J."/>
        </authorList>
    </citation>
    <scope>NUCLEOTIDE SEQUENCE [GENOMIC DNA]</scope>
    <source>
        <strain>ATCC 204508 / S288c</strain>
    </source>
</reference>
<reference key="5">
    <citation type="journal article" date="2001" name="Cell">
        <title>Yeast Cbk1 and Mob2 activate daughter-specific genetic programs to induce asymmetric cell fates.</title>
        <authorList>
            <person name="Colman-Lerner A."/>
            <person name="Chin T.E."/>
            <person name="Brent R."/>
        </authorList>
    </citation>
    <scope>INDUCTION</scope>
    <scope>DEVELOPMENTAL STAGE</scope>
</reference>
<reference key="6">
    <citation type="journal article" date="2001" name="Mol. Microbiol.">
        <title>Overlapping and distinct roles of the duplicated yeast transcription factors Ace2p and Swi5p.</title>
        <authorList>
            <person name="Doolin M.-T."/>
            <person name="Johnson A.L."/>
            <person name="Johnston L.H."/>
            <person name="Butler G."/>
        </authorList>
    </citation>
    <scope>INDUCTION</scope>
</reference>
<reference key="7">
    <citation type="journal article" date="2003" name="Nature">
        <title>Global analysis of protein localization in budding yeast.</title>
        <authorList>
            <person name="Huh W.-K."/>
            <person name="Falvo J.V."/>
            <person name="Gerke L.C."/>
            <person name="Carroll A.S."/>
            <person name="Howson R.W."/>
            <person name="Weissman J.S."/>
            <person name="O'Shea E.K."/>
        </authorList>
    </citation>
    <scope>SUBCELLULAR LOCATION [LARGE SCALE ANALYSIS]</scope>
</reference>
<reference key="8">
    <citation type="journal article" date="2003" name="Nature">
        <title>Global analysis of protein expression in yeast.</title>
        <authorList>
            <person name="Ghaemmaghami S."/>
            <person name="Huh W.-K."/>
            <person name="Bower K."/>
            <person name="Howson R.W."/>
            <person name="Belle A."/>
            <person name="Dephoure N."/>
            <person name="O'Shea E.K."/>
            <person name="Weissman J.S."/>
        </authorList>
    </citation>
    <scope>LEVEL OF PROTEIN EXPRESSION [LARGE SCALE ANALYSIS]</scope>
</reference>
<reference key="9">
    <citation type="journal article" date="2005" name="Yeast">
        <title>New weakly expressed cell cycle-regulated genes in yeast.</title>
        <authorList>
            <person name="de Lichtenberg U."/>
            <person name="Wernersson R."/>
            <person name="Jensen T.S."/>
            <person name="Nielsen H.B."/>
            <person name="Fausboell A."/>
            <person name="Schmidt P."/>
            <person name="Hansen F.B."/>
            <person name="Knudsen S."/>
            <person name="Brunak S."/>
        </authorList>
    </citation>
    <scope>PERIODIC EXPRESSION DURING CELL CYCLE</scope>
</reference>
<reference key="10">
    <citation type="journal article" date="2009" name="Science">
        <title>Global analysis of Cdk1 substrate phosphorylation sites provides insights into evolution.</title>
        <authorList>
            <person name="Holt L.J."/>
            <person name="Tuch B.B."/>
            <person name="Villen J."/>
            <person name="Johnson A.D."/>
            <person name="Gygi S.P."/>
            <person name="Morgan D.O."/>
        </authorList>
    </citation>
    <scope>PHOSPHORYLATION [LARGE SCALE ANALYSIS] AT SER-395</scope>
    <scope>IDENTIFICATION BY MASS SPECTROMETRY [LARGE SCALE ANALYSIS]</scope>
</reference>
<accession>Q08729</accession>
<accession>D6W2W4</accession>
<feature type="chain" id="PRO_0000233007" description="Protein DSE3">
    <location>
        <begin position="1"/>
        <end position="430"/>
    </location>
</feature>
<feature type="modified residue" description="Phosphoserine" evidence="5">
    <location>
        <position position="395"/>
    </location>
</feature>
<feature type="helix" evidence="6">
    <location>
        <begin position="65"/>
        <end position="67"/>
    </location>
</feature>
<gene>
    <name type="primary">DSE3</name>
    <name type="ordered locus">YOR264W</name>
</gene>
<proteinExistence type="evidence at protein level"/>
<organism>
    <name type="scientific">Saccharomyces cerevisiae (strain ATCC 204508 / S288c)</name>
    <name type="common">Baker's yeast</name>
    <dbReference type="NCBI Taxonomy" id="559292"/>
    <lineage>
        <taxon>Eukaryota</taxon>
        <taxon>Fungi</taxon>
        <taxon>Dikarya</taxon>
        <taxon>Ascomycota</taxon>
        <taxon>Saccharomycotina</taxon>
        <taxon>Saccharomycetes</taxon>
        <taxon>Saccharomycetales</taxon>
        <taxon>Saccharomycetaceae</taxon>
        <taxon>Saccharomyces</taxon>
    </lineage>
</organism>
<sequence length="430" mass="48099">MPRKFLGNKIEKNVDAVRPSSLTLTADDLKYIPPIPQDFEDEDDKVLRTSNGGNRLSKRFGGTLKLKKRLESVPELFLHDFKKRPRSQLEVIREKKFTDMQVPKGPVCPQSTILPLRERKKVKSLPIQRKSLRRPTLSKPAVVQSLGHKTHSDHIIDKVFVSRPAPIVMPVKALTPINPVSLMQTQTQDCCRKNKYGKSGSEILFDEILSAYENVSTSDSTALNSEIDRIIDICASKQIAKKNEAFQVPYVVCPDDTETLFSSTTPKLKPVNSNTLNDVISSPEYTTSGCSTYSDQSNSDEELSEVESIVWNTNKRTMRSSIVSESTSEEGYCTAAETLPSTVSVEDLDIHNKLPKVAQTSSCNTLLNKLSIRKLKKVILDPPKIMHVMTFDDDSDDGDDNDDEDRALNILQKKIDCIEIASCSSSIYSE</sequence>
<name>DSE3_YEAST</name>
<dbReference type="EMBL" id="Z75171">
    <property type="protein sequence ID" value="CAA99486.1"/>
    <property type="molecule type" value="Genomic_DNA"/>
</dbReference>
<dbReference type="EMBL" id="AY693175">
    <property type="protein sequence ID" value="AAT93194.1"/>
    <property type="molecule type" value="Genomic_DNA"/>
</dbReference>
<dbReference type="EMBL" id="BK006948">
    <property type="protein sequence ID" value="DAA11030.1"/>
    <property type="molecule type" value="Genomic_DNA"/>
</dbReference>
<dbReference type="PIR" id="S67161">
    <property type="entry name" value="S67161"/>
</dbReference>
<dbReference type="RefSeq" id="NP_014907.3">
    <property type="nucleotide sequence ID" value="NM_001183683.3"/>
</dbReference>
<dbReference type="PDB" id="6DEI">
    <property type="method" value="X-ray"/>
    <property type="resolution" value="1.70 A"/>
    <property type="chains" value="C/D=60-80"/>
</dbReference>
<dbReference type="PDBsum" id="6DEI"/>
<dbReference type="SMR" id="Q08729"/>
<dbReference type="BioGRID" id="34653">
    <property type="interactions" value="85"/>
</dbReference>
<dbReference type="DIP" id="DIP-1997N"/>
<dbReference type="FunCoup" id="Q08729">
    <property type="interactions" value="66"/>
</dbReference>
<dbReference type="IntAct" id="Q08729">
    <property type="interactions" value="6"/>
</dbReference>
<dbReference type="MINT" id="Q08729"/>
<dbReference type="STRING" id="4932.YOR264W"/>
<dbReference type="iPTMnet" id="Q08729"/>
<dbReference type="PaxDb" id="4932-YOR264W"/>
<dbReference type="PeptideAtlas" id="Q08729"/>
<dbReference type="EnsemblFungi" id="YOR264W_mRNA">
    <property type="protein sequence ID" value="YOR264W"/>
    <property type="gene ID" value="YOR264W"/>
</dbReference>
<dbReference type="GeneID" id="854437"/>
<dbReference type="KEGG" id="sce:YOR264W"/>
<dbReference type="AGR" id="SGD:S000005790"/>
<dbReference type="SGD" id="S000005790">
    <property type="gene designation" value="DSE3"/>
</dbReference>
<dbReference type="VEuPathDB" id="FungiDB:YOR264W"/>
<dbReference type="eggNOG" id="ENOG502S2PC">
    <property type="taxonomic scope" value="Eukaryota"/>
</dbReference>
<dbReference type="HOGENOM" id="CLU_052222_0_0_1"/>
<dbReference type="InParanoid" id="Q08729"/>
<dbReference type="OMA" id="ICASKQI"/>
<dbReference type="OrthoDB" id="4036231at2759"/>
<dbReference type="BioCyc" id="YEAST:G3O-33754-MONOMER"/>
<dbReference type="BioGRID-ORCS" id="854437">
    <property type="hits" value="3 hits in 10 CRISPR screens"/>
</dbReference>
<dbReference type="PRO" id="PR:Q08729"/>
<dbReference type="Proteomes" id="UP000002311">
    <property type="component" value="Chromosome XV"/>
</dbReference>
<dbReference type="RNAct" id="Q08729">
    <property type="molecule type" value="protein"/>
</dbReference>
<dbReference type="GO" id="GO:0005935">
    <property type="term" value="C:cellular bud neck"/>
    <property type="evidence" value="ECO:0007005"/>
    <property type="project" value="SGD"/>
</dbReference>
<dbReference type="GO" id="GO:0005737">
    <property type="term" value="C:cytoplasm"/>
    <property type="evidence" value="ECO:0007005"/>
    <property type="project" value="SGD"/>
</dbReference>
<dbReference type="GO" id="GO:0005634">
    <property type="term" value="C:nucleus"/>
    <property type="evidence" value="ECO:0007005"/>
    <property type="project" value="SGD"/>
</dbReference>
<protein>
    <recommendedName>
        <fullName>Protein DSE3</fullName>
    </recommendedName>
    <alternativeName>
        <fullName>Daughter specific expression protein 3</fullName>
    </alternativeName>
</protein>